<evidence type="ECO:0000250" key="1">
    <source>
        <dbReference type="UniProtKB" id="P00730"/>
    </source>
</evidence>
<evidence type="ECO:0000250" key="2">
    <source>
        <dbReference type="UniProtKB" id="Q09M02"/>
    </source>
</evidence>
<evidence type="ECO:0000255" key="3">
    <source>
        <dbReference type="PROSITE-ProRule" id="PRU01379"/>
    </source>
</evidence>
<evidence type="ECO:0000256" key="4">
    <source>
        <dbReference type="SAM" id="MobiDB-lite"/>
    </source>
</evidence>
<evidence type="ECO:0000269" key="5">
    <source>
    </source>
</evidence>
<evidence type="ECO:0000269" key="6">
    <source>
    </source>
</evidence>
<evidence type="ECO:0000269" key="7">
    <source>
    </source>
</evidence>
<evidence type="ECO:0000269" key="8">
    <source>
    </source>
</evidence>
<evidence type="ECO:0000269" key="9">
    <source>
    </source>
</evidence>
<evidence type="ECO:0000303" key="10">
    <source>
    </source>
</evidence>
<evidence type="ECO:0000303" key="11">
    <source>
    </source>
</evidence>
<evidence type="ECO:0000305" key="12"/>
<evidence type="ECO:0000312" key="13">
    <source>
        <dbReference type="HGNC" id="HGNC:26147"/>
    </source>
</evidence>
<evidence type="ECO:0007829" key="14">
    <source>
        <dbReference type="PDB" id="8V3M"/>
    </source>
</evidence>
<evidence type="ECO:0007829" key="15">
    <source>
        <dbReference type="PDB" id="8V3O"/>
    </source>
</evidence>
<evidence type="ECO:0007829" key="16">
    <source>
        <dbReference type="PDB" id="8V4L"/>
    </source>
</evidence>
<evidence type="ECO:0007829" key="17">
    <source>
        <dbReference type="PDB" id="8V4M"/>
    </source>
</evidence>
<feature type="chain" id="PRO_0000305921" description="Cytosolic carboxypeptidase-like protein 5">
    <location>
        <begin position="1"/>
        <end position="886"/>
    </location>
</feature>
<feature type="domain" description="Peptidase M14" evidence="3">
    <location>
        <begin position="157"/>
        <end position="570"/>
    </location>
</feature>
<feature type="region of interest" description="Disordered" evidence="4">
    <location>
        <begin position="344"/>
        <end position="364"/>
    </location>
</feature>
<feature type="region of interest" description="Disordered" evidence="4">
    <location>
        <begin position="605"/>
        <end position="734"/>
    </location>
</feature>
<feature type="region of interest" description="Disordered" evidence="4">
    <location>
        <begin position="784"/>
        <end position="848"/>
    </location>
</feature>
<feature type="compositionally biased region" description="Low complexity" evidence="4">
    <location>
        <begin position="344"/>
        <end position="354"/>
    </location>
</feature>
<feature type="compositionally biased region" description="Polar residues" evidence="4">
    <location>
        <begin position="631"/>
        <end position="640"/>
    </location>
</feature>
<feature type="compositionally biased region" description="Low complexity" evidence="4">
    <location>
        <begin position="641"/>
        <end position="666"/>
    </location>
</feature>
<feature type="compositionally biased region" description="Basic and acidic residues" evidence="4">
    <location>
        <begin position="696"/>
        <end position="705"/>
    </location>
</feature>
<feature type="compositionally biased region" description="Low complexity" evidence="4">
    <location>
        <begin position="714"/>
        <end position="732"/>
    </location>
</feature>
<feature type="active site" description="Proton donor/acceptor" evidence="3">
    <location>
        <position position="516"/>
    </location>
</feature>
<feature type="binding site" evidence="3">
    <location>
        <position position="252"/>
    </location>
    <ligand>
        <name>Zn(2+)</name>
        <dbReference type="ChEBI" id="CHEBI:29105"/>
        <note>catalytic</note>
    </ligand>
</feature>
<feature type="binding site" evidence="3">
    <location>
        <position position="255"/>
    </location>
    <ligand>
        <name>Zn(2+)</name>
        <dbReference type="ChEBI" id="CHEBI:29105"/>
        <note>catalytic</note>
    </ligand>
</feature>
<feature type="binding site" evidence="3">
    <location>
        <position position="434"/>
    </location>
    <ligand>
        <name>Zn(2+)</name>
        <dbReference type="ChEBI" id="CHEBI:29105"/>
        <note>catalytic</note>
    </ligand>
</feature>
<feature type="modified residue" description="Phosphoserine" evidence="2">
    <location>
        <position position="841"/>
    </location>
</feature>
<feature type="splice variant" id="VSP_028359" description="In isoform 3." evidence="10 11">
    <original>EPRSQDRRRQQQPLNHRPAGS</original>
    <variation>GKPVWEPLQHVFGCLGHCWGK</variation>
    <location>
        <begin position="697"/>
        <end position="717"/>
    </location>
</feature>
<feature type="splice variant" id="VSP_028360" description="In isoform 3." evidence="10 11">
    <location>
        <begin position="718"/>
        <end position="886"/>
    </location>
</feature>
<feature type="splice variant" id="VSP_028361" description="In isoform 2." evidence="11">
    <original>ARPRLGRGSPPTRRGMKGSSGPTSPTPRTRE</original>
    <variation>TCPRRVSARRGPGFPRLGPGWAGAHRRLAEG</variation>
    <location>
        <begin position="786"/>
        <end position="816"/>
    </location>
</feature>
<feature type="splice variant" id="VSP_028362" description="In isoform 2." evidence="11">
    <location>
        <begin position="817"/>
        <end position="886"/>
    </location>
</feature>
<feature type="sequence variant" id="VAR_079522" description="In RP75; uncertain significance; dbSNP:rs1271339736." evidence="9">
    <original>P</original>
    <variation>R</variation>
    <location>
        <position position="108"/>
    </location>
</feature>
<feature type="sequence variant" id="VAR_079523" description="In RP75; uncertain significance." evidence="9">
    <original>V</original>
    <variation>G</variation>
    <location>
        <position position="251"/>
    </location>
</feature>
<feature type="sequence variant" id="VAR_077018" description="In RP75; dbSNP:rs879253769." evidence="6">
    <original>R</original>
    <variation>W</variation>
    <location>
        <position position="276"/>
    </location>
</feature>
<feature type="sequence variant" id="VAR_079524" description="In RP75; uncertain significance; dbSNP:rs780394281." evidence="8">
    <original>R</original>
    <variation>C</variation>
    <location>
        <position position="281"/>
    </location>
</feature>
<feature type="sequence variant" id="VAR_077019" description="In RP75; dbSNP:rs879253768." evidence="7">
    <original>D</original>
    <variation>N</variation>
    <location>
        <position position="295"/>
    </location>
</feature>
<feature type="sequence variant" id="VAR_079525" description="In RP75." evidence="8">
    <location>
        <begin position="487"/>
        <end position="886"/>
    </location>
</feature>
<feature type="sequence variant" id="VAR_079526" description="In RP75." evidence="9">
    <location>
        <begin position="592"/>
        <end position="886"/>
    </location>
</feature>
<feature type="sequence variant" id="VAR_035231" description="In dbSNP:rs35804461.">
    <original>G</original>
    <variation>D</variation>
    <location>
        <position position="649"/>
    </location>
</feature>
<feature type="sequence conflict" description="In Ref. 5; AAI31499." evidence="12" ref="5">
    <original>GAS</original>
    <variation>CLL</variation>
    <location>
        <begin position="38"/>
        <end position="40"/>
    </location>
</feature>
<feature type="sequence conflict" description="In Ref. 2; BAH13623." evidence="12" ref="2">
    <original>N</original>
    <variation>S</variation>
    <location>
        <position position="94"/>
    </location>
</feature>
<feature type="sequence conflict" description="In Ref. 5; AAI31499." evidence="12" ref="5">
    <original>I</original>
    <variation>R</variation>
    <location>
        <position position="122"/>
    </location>
</feature>
<feature type="sequence conflict" description="In Ref. 2; BAB15151." evidence="12" ref="2">
    <original>S</original>
    <variation>G</variation>
    <location>
        <position position="672"/>
    </location>
</feature>
<feature type="strand" evidence="14">
    <location>
        <begin position="3"/>
        <end position="5"/>
    </location>
</feature>
<feature type="strand" evidence="14">
    <location>
        <begin position="8"/>
        <end position="11"/>
    </location>
</feature>
<feature type="strand" evidence="14">
    <location>
        <begin position="21"/>
        <end position="26"/>
    </location>
</feature>
<feature type="strand" evidence="14">
    <location>
        <begin position="51"/>
        <end position="57"/>
    </location>
</feature>
<feature type="turn" evidence="14">
    <location>
        <begin position="61"/>
        <end position="64"/>
    </location>
</feature>
<feature type="strand" evidence="14">
    <location>
        <begin position="76"/>
        <end position="80"/>
    </location>
</feature>
<feature type="strand" evidence="14">
    <location>
        <begin position="87"/>
        <end position="92"/>
    </location>
</feature>
<feature type="helix" evidence="14">
    <location>
        <begin position="99"/>
        <end position="103"/>
    </location>
</feature>
<feature type="strand" evidence="14">
    <location>
        <begin position="109"/>
        <end position="113"/>
    </location>
</feature>
<feature type="strand" evidence="14">
    <location>
        <begin position="116"/>
        <end position="121"/>
    </location>
</feature>
<feature type="strand" evidence="14">
    <location>
        <begin position="127"/>
        <end position="130"/>
    </location>
</feature>
<feature type="strand" evidence="14">
    <location>
        <begin position="135"/>
        <end position="142"/>
    </location>
</feature>
<feature type="strand" evidence="17">
    <location>
        <begin position="145"/>
        <end position="148"/>
    </location>
</feature>
<feature type="strand" evidence="14">
    <location>
        <begin position="150"/>
        <end position="156"/>
    </location>
</feature>
<feature type="helix" evidence="14">
    <location>
        <begin position="161"/>
        <end position="174"/>
    </location>
</feature>
<feature type="helix" evidence="14">
    <location>
        <begin position="185"/>
        <end position="187"/>
    </location>
</feature>
<feature type="strand" evidence="14">
    <location>
        <begin position="188"/>
        <end position="198"/>
    </location>
</feature>
<feature type="strand" evidence="14">
    <location>
        <begin position="204"/>
        <end position="213"/>
    </location>
</feature>
<feature type="strand" evidence="14">
    <location>
        <begin position="216"/>
        <end position="220"/>
    </location>
</feature>
<feature type="strand" evidence="16">
    <location>
        <begin position="231"/>
        <end position="233"/>
    </location>
</feature>
<feature type="strand" evidence="14">
    <location>
        <begin position="237"/>
        <end position="241"/>
    </location>
</feature>
<feature type="strand" evidence="14">
    <location>
        <begin position="243"/>
        <end position="248"/>
    </location>
</feature>
<feature type="helix" evidence="14">
    <location>
        <begin position="256"/>
        <end position="269"/>
    </location>
</feature>
<feature type="helix" evidence="14">
    <location>
        <begin position="275"/>
        <end position="283"/>
    </location>
</feature>
<feature type="strand" evidence="14">
    <location>
        <begin position="284"/>
        <end position="290"/>
    </location>
</feature>
<feature type="helix" evidence="14">
    <location>
        <begin position="294"/>
        <end position="298"/>
    </location>
</feature>
<feature type="strand" evidence="17">
    <location>
        <begin position="302"/>
        <end position="304"/>
    </location>
</feature>
<feature type="helix" evidence="14">
    <location>
        <begin position="311"/>
        <end position="313"/>
    </location>
</feature>
<feature type="strand" evidence="14">
    <location>
        <begin position="315"/>
        <end position="317"/>
    </location>
</feature>
<feature type="turn" evidence="14">
    <location>
        <begin position="320"/>
        <end position="322"/>
    </location>
</feature>
<feature type="helix" evidence="14">
    <location>
        <begin position="324"/>
        <end position="338"/>
    </location>
</feature>
<feature type="turn" evidence="16">
    <location>
        <begin position="422"/>
        <end position="424"/>
    </location>
</feature>
<feature type="strand" evidence="14">
    <location>
        <begin position="426"/>
        <end position="439"/>
    </location>
</feature>
<feature type="strand" evidence="14">
    <location>
        <begin position="441"/>
        <end position="446"/>
    </location>
</feature>
<feature type="helix" evidence="14">
    <location>
        <begin position="452"/>
        <end position="468"/>
    </location>
</feature>
<feature type="strand" evidence="16">
    <location>
        <begin position="470"/>
        <end position="472"/>
    </location>
</feature>
<feature type="helix" evidence="14">
    <location>
        <begin position="474"/>
        <end position="476"/>
    </location>
</feature>
<feature type="helix" evidence="14">
    <location>
        <begin position="482"/>
        <end position="485"/>
    </location>
</feature>
<feature type="strand" evidence="14">
    <location>
        <begin position="489"/>
        <end position="491"/>
    </location>
</feature>
<feature type="helix" evidence="14">
    <location>
        <begin position="495"/>
        <end position="497"/>
    </location>
</feature>
<feature type="helix" evidence="14">
    <location>
        <begin position="499"/>
        <end position="507"/>
    </location>
</feature>
<feature type="strand" evidence="14">
    <location>
        <begin position="512"/>
        <end position="520"/>
    </location>
</feature>
<feature type="strand" evidence="14">
    <location>
        <begin position="532"/>
        <end position="534"/>
    </location>
</feature>
<feature type="helix" evidence="14">
    <location>
        <begin position="552"/>
        <end position="570"/>
    </location>
</feature>
<feature type="helix" evidence="15">
    <location>
        <begin position="578"/>
        <end position="580"/>
    </location>
</feature>
<feature type="strand" evidence="14">
    <location>
        <begin position="581"/>
        <end position="583"/>
    </location>
</feature>
<feature type="helix" evidence="14">
    <location>
        <begin position="586"/>
        <end position="598"/>
    </location>
</feature>
<gene>
    <name evidence="13" type="primary">AGBL5</name>
    <name evidence="2" type="synonym">CCP5</name>
</gene>
<keyword id="KW-0002">3D-structure</keyword>
<keyword id="KW-0025">Alternative splicing</keyword>
<keyword id="KW-0121">Carboxypeptidase</keyword>
<keyword id="KW-0963">Cytoplasm</keyword>
<keyword id="KW-0206">Cytoskeleton</keyword>
<keyword id="KW-0225">Disease variant</keyword>
<keyword id="KW-0378">Hydrolase</keyword>
<keyword id="KW-0479">Metal-binding</keyword>
<keyword id="KW-0482">Metalloprotease</keyword>
<keyword id="KW-0539">Nucleus</keyword>
<keyword id="KW-0597">Phosphoprotein</keyword>
<keyword id="KW-0645">Protease</keyword>
<keyword id="KW-1267">Proteomics identification</keyword>
<keyword id="KW-1185">Reference proteome</keyword>
<keyword id="KW-0682">Retinitis pigmentosa</keyword>
<keyword id="KW-0862">Zinc</keyword>
<accession>Q8NDL9</accession>
<accession>A2VDI7</accession>
<accession>B7WPG9</accession>
<accession>B7Z7I7</accession>
<accession>D6W548</accession>
<accession>Q53SW0</accession>
<accession>Q53SZ0</accession>
<accession>Q96IK8</accession>
<accession>Q9H6V0</accession>
<accession>Q9H8P8</accession>
<reference key="1">
    <citation type="journal article" date="2007" name="BMC Genomics">
        <title>The full-ORF clone resource of the German cDNA consortium.</title>
        <authorList>
            <person name="Bechtel S."/>
            <person name="Rosenfelder H."/>
            <person name="Duda A."/>
            <person name="Schmidt C.P."/>
            <person name="Ernst U."/>
            <person name="Wellenreuther R."/>
            <person name="Mehrle A."/>
            <person name="Schuster C."/>
            <person name="Bahr A."/>
            <person name="Bloecker H."/>
            <person name="Heubner D."/>
            <person name="Hoerlein A."/>
            <person name="Michel G."/>
            <person name="Wedler H."/>
            <person name="Koehrer K."/>
            <person name="Ottenwaelder B."/>
            <person name="Poustka A."/>
            <person name="Wiemann S."/>
            <person name="Schupp I."/>
        </authorList>
    </citation>
    <scope>NUCLEOTIDE SEQUENCE [LARGE SCALE MRNA] (ISOFORM 1)</scope>
    <source>
        <tissue>Testis</tissue>
    </source>
</reference>
<reference key="2">
    <citation type="journal article" date="2004" name="Nat. Genet.">
        <title>Complete sequencing and characterization of 21,243 full-length human cDNAs.</title>
        <authorList>
            <person name="Ota T."/>
            <person name="Suzuki Y."/>
            <person name="Nishikawa T."/>
            <person name="Otsuki T."/>
            <person name="Sugiyama T."/>
            <person name="Irie R."/>
            <person name="Wakamatsu A."/>
            <person name="Hayashi K."/>
            <person name="Sato H."/>
            <person name="Nagai K."/>
            <person name="Kimura K."/>
            <person name="Makita H."/>
            <person name="Sekine M."/>
            <person name="Obayashi M."/>
            <person name="Nishi T."/>
            <person name="Shibahara T."/>
            <person name="Tanaka T."/>
            <person name="Ishii S."/>
            <person name="Yamamoto J."/>
            <person name="Saito K."/>
            <person name="Kawai Y."/>
            <person name="Isono Y."/>
            <person name="Nakamura Y."/>
            <person name="Nagahari K."/>
            <person name="Murakami K."/>
            <person name="Yasuda T."/>
            <person name="Iwayanagi T."/>
            <person name="Wagatsuma M."/>
            <person name="Shiratori A."/>
            <person name="Sudo H."/>
            <person name="Hosoiri T."/>
            <person name="Kaku Y."/>
            <person name="Kodaira H."/>
            <person name="Kondo H."/>
            <person name="Sugawara M."/>
            <person name="Takahashi M."/>
            <person name="Kanda K."/>
            <person name="Yokoi T."/>
            <person name="Furuya T."/>
            <person name="Kikkawa E."/>
            <person name="Omura Y."/>
            <person name="Abe K."/>
            <person name="Kamihara K."/>
            <person name="Katsuta N."/>
            <person name="Sato K."/>
            <person name="Tanikawa M."/>
            <person name="Yamazaki M."/>
            <person name="Ninomiya K."/>
            <person name="Ishibashi T."/>
            <person name="Yamashita H."/>
            <person name="Murakawa K."/>
            <person name="Fujimori K."/>
            <person name="Tanai H."/>
            <person name="Kimata M."/>
            <person name="Watanabe M."/>
            <person name="Hiraoka S."/>
            <person name="Chiba Y."/>
            <person name="Ishida S."/>
            <person name="Ono Y."/>
            <person name="Takiguchi S."/>
            <person name="Watanabe S."/>
            <person name="Yosida M."/>
            <person name="Hotuta T."/>
            <person name="Kusano J."/>
            <person name="Kanehori K."/>
            <person name="Takahashi-Fujii A."/>
            <person name="Hara H."/>
            <person name="Tanase T.-O."/>
            <person name="Nomura Y."/>
            <person name="Togiya S."/>
            <person name="Komai F."/>
            <person name="Hara R."/>
            <person name="Takeuchi K."/>
            <person name="Arita M."/>
            <person name="Imose N."/>
            <person name="Musashino K."/>
            <person name="Yuuki H."/>
            <person name="Oshima A."/>
            <person name="Sasaki N."/>
            <person name="Aotsuka S."/>
            <person name="Yoshikawa Y."/>
            <person name="Matsunawa H."/>
            <person name="Ichihara T."/>
            <person name="Shiohata N."/>
            <person name="Sano S."/>
            <person name="Moriya S."/>
            <person name="Momiyama H."/>
            <person name="Satoh N."/>
            <person name="Takami S."/>
            <person name="Terashima Y."/>
            <person name="Suzuki O."/>
            <person name="Nakagawa S."/>
            <person name="Senoh A."/>
            <person name="Mizoguchi H."/>
            <person name="Goto Y."/>
            <person name="Shimizu F."/>
            <person name="Wakebe H."/>
            <person name="Hishigaki H."/>
            <person name="Watanabe T."/>
            <person name="Sugiyama A."/>
            <person name="Takemoto M."/>
            <person name="Kawakami B."/>
            <person name="Yamazaki M."/>
            <person name="Watanabe K."/>
            <person name="Kumagai A."/>
            <person name="Itakura S."/>
            <person name="Fukuzumi Y."/>
            <person name="Fujimori Y."/>
            <person name="Komiyama M."/>
            <person name="Tashiro H."/>
            <person name="Tanigami A."/>
            <person name="Fujiwara T."/>
            <person name="Ono T."/>
            <person name="Yamada K."/>
            <person name="Fujii Y."/>
            <person name="Ozaki K."/>
            <person name="Hirao M."/>
            <person name="Ohmori Y."/>
            <person name="Kawabata A."/>
            <person name="Hikiji T."/>
            <person name="Kobatake N."/>
            <person name="Inagaki H."/>
            <person name="Ikema Y."/>
            <person name="Okamoto S."/>
            <person name="Okitani R."/>
            <person name="Kawakami T."/>
            <person name="Noguchi S."/>
            <person name="Itoh T."/>
            <person name="Shigeta K."/>
            <person name="Senba T."/>
            <person name="Matsumura K."/>
            <person name="Nakajima Y."/>
            <person name="Mizuno T."/>
            <person name="Morinaga M."/>
            <person name="Sasaki M."/>
            <person name="Togashi T."/>
            <person name="Oyama M."/>
            <person name="Hata H."/>
            <person name="Watanabe M."/>
            <person name="Komatsu T."/>
            <person name="Mizushima-Sugano J."/>
            <person name="Satoh T."/>
            <person name="Shirai Y."/>
            <person name="Takahashi Y."/>
            <person name="Nakagawa K."/>
            <person name="Okumura K."/>
            <person name="Nagase T."/>
            <person name="Nomura N."/>
            <person name="Kikuchi H."/>
            <person name="Masuho Y."/>
            <person name="Yamashita R."/>
            <person name="Nakai K."/>
            <person name="Yada T."/>
            <person name="Nakamura Y."/>
            <person name="Ohara O."/>
            <person name="Isogai T."/>
            <person name="Sugano S."/>
        </authorList>
    </citation>
    <scope>NUCLEOTIDE SEQUENCE [LARGE SCALE MRNA] (ISOFORM 3)</scope>
    <source>
        <tissue>Ovary</tissue>
        <tissue>Testis</tissue>
    </source>
</reference>
<reference key="3">
    <citation type="journal article" date="2005" name="Nature">
        <title>Generation and annotation of the DNA sequences of human chromosomes 2 and 4.</title>
        <authorList>
            <person name="Hillier L.W."/>
            <person name="Graves T.A."/>
            <person name="Fulton R.S."/>
            <person name="Fulton L.A."/>
            <person name="Pepin K.H."/>
            <person name="Minx P."/>
            <person name="Wagner-McPherson C."/>
            <person name="Layman D."/>
            <person name="Wylie K."/>
            <person name="Sekhon M."/>
            <person name="Becker M.C."/>
            <person name="Fewell G.A."/>
            <person name="Delehaunty K.D."/>
            <person name="Miner T.L."/>
            <person name="Nash W.E."/>
            <person name="Kremitzki C."/>
            <person name="Oddy L."/>
            <person name="Du H."/>
            <person name="Sun H."/>
            <person name="Bradshaw-Cordum H."/>
            <person name="Ali J."/>
            <person name="Carter J."/>
            <person name="Cordes M."/>
            <person name="Harris A."/>
            <person name="Isak A."/>
            <person name="van Brunt A."/>
            <person name="Nguyen C."/>
            <person name="Du F."/>
            <person name="Courtney L."/>
            <person name="Kalicki J."/>
            <person name="Ozersky P."/>
            <person name="Abbott S."/>
            <person name="Armstrong J."/>
            <person name="Belter E.A."/>
            <person name="Caruso L."/>
            <person name="Cedroni M."/>
            <person name="Cotton M."/>
            <person name="Davidson T."/>
            <person name="Desai A."/>
            <person name="Elliott G."/>
            <person name="Erb T."/>
            <person name="Fronick C."/>
            <person name="Gaige T."/>
            <person name="Haakenson W."/>
            <person name="Haglund K."/>
            <person name="Holmes A."/>
            <person name="Harkins R."/>
            <person name="Kim K."/>
            <person name="Kruchowski S.S."/>
            <person name="Strong C.M."/>
            <person name="Grewal N."/>
            <person name="Goyea E."/>
            <person name="Hou S."/>
            <person name="Levy A."/>
            <person name="Martinka S."/>
            <person name="Mead K."/>
            <person name="McLellan M.D."/>
            <person name="Meyer R."/>
            <person name="Randall-Maher J."/>
            <person name="Tomlinson C."/>
            <person name="Dauphin-Kohlberg S."/>
            <person name="Kozlowicz-Reilly A."/>
            <person name="Shah N."/>
            <person name="Swearengen-Shahid S."/>
            <person name="Snider J."/>
            <person name="Strong J.T."/>
            <person name="Thompson J."/>
            <person name="Yoakum M."/>
            <person name="Leonard S."/>
            <person name="Pearman C."/>
            <person name="Trani L."/>
            <person name="Radionenko M."/>
            <person name="Waligorski J.E."/>
            <person name="Wang C."/>
            <person name="Rock S.M."/>
            <person name="Tin-Wollam A.-M."/>
            <person name="Maupin R."/>
            <person name="Latreille P."/>
            <person name="Wendl M.C."/>
            <person name="Yang S.-P."/>
            <person name="Pohl C."/>
            <person name="Wallis J.W."/>
            <person name="Spieth J."/>
            <person name="Bieri T.A."/>
            <person name="Berkowicz N."/>
            <person name="Nelson J.O."/>
            <person name="Osborne J."/>
            <person name="Ding L."/>
            <person name="Meyer R."/>
            <person name="Sabo A."/>
            <person name="Shotland Y."/>
            <person name="Sinha P."/>
            <person name="Wohldmann P.E."/>
            <person name="Cook L.L."/>
            <person name="Hickenbotham M.T."/>
            <person name="Eldred J."/>
            <person name="Williams D."/>
            <person name="Jones T.A."/>
            <person name="She X."/>
            <person name="Ciccarelli F.D."/>
            <person name="Izaurralde E."/>
            <person name="Taylor J."/>
            <person name="Schmutz J."/>
            <person name="Myers R.M."/>
            <person name="Cox D.R."/>
            <person name="Huang X."/>
            <person name="McPherson J.D."/>
            <person name="Mardis E.R."/>
            <person name="Clifton S.W."/>
            <person name="Warren W.C."/>
            <person name="Chinwalla A.T."/>
            <person name="Eddy S.R."/>
            <person name="Marra M.A."/>
            <person name="Ovcharenko I."/>
            <person name="Furey T.S."/>
            <person name="Miller W."/>
            <person name="Eichler E.E."/>
            <person name="Bork P."/>
            <person name="Suyama M."/>
            <person name="Torrents D."/>
            <person name="Waterston R.H."/>
            <person name="Wilson R.K."/>
        </authorList>
    </citation>
    <scope>NUCLEOTIDE SEQUENCE [LARGE SCALE GENOMIC DNA]</scope>
</reference>
<reference key="4">
    <citation type="submission" date="2005-09" db="EMBL/GenBank/DDBJ databases">
        <authorList>
            <person name="Mural R.J."/>
            <person name="Istrail S."/>
            <person name="Sutton G.G."/>
            <person name="Florea L."/>
            <person name="Halpern A.L."/>
            <person name="Mobarry C.M."/>
            <person name="Lippert R."/>
            <person name="Walenz B."/>
            <person name="Shatkay H."/>
            <person name="Dew I."/>
            <person name="Miller J.R."/>
            <person name="Flanigan M.J."/>
            <person name="Edwards N.J."/>
            <person name="Bolanos R."/>
            <person name="Fasulo D."/>
            <person name="Halldorsson B.V."/>
            <person name="Hannenhalli S."/>
            <person name="Turner R."/>
            <person name="Yooseph S."/>
            <person name="Lu F."/>
            <person name="Nusskern D.R."/>
            <person name="Shue B.C."/>
            <person name="Zheng X.H."/>
            <person name="Zhong F."/>
            <person name="Delcher A.L."/>
            <person name="Huson D.H."/>
            <person name="Kravitz S.A."/>
            <person name="Mouchard L."/>
            <person name="Reinert K."/>
            <person name="Remington K.A."/>
            <person name="Clark A.G."/>
            <person name="Waterman M.S."/>
            <person name="Eichler E.E."/>
            <person name="Adams M.D."/>
            <person name="Hunkapiller M.W."/>
            <person name="Myers E.W."/>
            <person name="Venter J.C."/>
        </authorList>
    </citation>
    <scope>NUCLEOTIDE SEQUENCE [LARGE SCALE GENOMIC DNA]</scope>
</reference>
<reference key="5">
    <citation type="journal article" date="2004" name="Genome Res.">
        <title>The status, quality, and expansion of the NIH full-length cDNA project: the Mammalian Gene Collection (MGC).</title>
        <authorList>
            <consortium name="The MGC Project Team"/>
        </authorList>
    </citation>
    <scope>NUCLEOTIDE SEQUENCE [LARGE SCALE MRNA] (ISOFORMS 2 AND 3)</scope>
    <source>
        <tissue>Skin</tissue>
    </source>
</reference>
<reference key="6">
    <citation type="journal article" date="2013" name="FASEB J.">
        <title>Functional segregation and emerging role of cilia-related cytosolic carboxypeptidases (CCPs).</title>
        <authorList>
            <person name="Rodriguez de la Vega Otazo M."/>
            <person name="Lorenzo J."/>
            <person name="Tort O."/>
            <person name="Aviles F.X."/>
            <person name="Bautista J.M."/>
        </authorList>
    </citation>
    <scope>SUBCELLULAR LOCATION</scope>
</reference>
<reference key="7">
    <citation type="journal article" date="2015" name="Invest. Ophthalmol. Vis. Sci.">
        <title>Exome Sequencing Reveals AGBL5 as Novel Candidate Gene and Additional Variants for Retinitis Pigmentosa in Five Turkish Families.</title>
        <authorList>
            <person name="Kastner S."/>
            <person name="Thiemann I.J."/>
            <person name="Dekomien G."/>
            <person name="Petrasch-Parwez E."/>
            <person name="Schreiber S."/>
            <person name="Akkad D.A."/>
            <person name="Gerding W.M."/>
            <person name="Hoffjan S."/>
            <person name="Guenes S."/>
            <person name="Guenes S."/>
            <person name="Bagci H."/>
            <person name="Epplen J.T."/>
        </authorList>
    </citation>
    <scope>INVOLVEMENT IN RP75</scope>
    <scope>VARIANT RP75 ASN-295</scope>
</reference>
<reference key="8">
    <citation type="journal article" date="2016" name="Genet. Med.">
        <title>Expanding the clinical, allelic, and locus heterogeneity of retinal dystrophies.</title>
        <authorList>
            <person name="Patel N."/>
            <person name="Aldahmesh M.A."/>
            <person name="Alkuraya H."/>
            <person name="Anazi S."/>
            <person name="Alsharif H."/>
            <person name="Khan A.O."/>
            <person name="Sunker A."/>
            <person name="Al-Mohsen S."/>
            <person name="Abboud E.B."/>
            <person name="Nowilaty S.R."/>
            <person name="Alowain M."/>
            <person name="Al-Zaidan H."/>
            <person name="Al-Saud B."/>
            <person name="Alasmari A."/>
            <person name="Abdel-Salam G.M."/>
            <person name="Abouelhoda M."/>
            <person name="Abdulwahab F.M."/>
            <person name="Ibrahim N."/>
            <person name="Naim E."/>
            <person name="Al-Younes B."/>
            <person name="E AlMostafa A."/>
            <person name="AlIssa A."/>
            <person name="Hashem M."/>
            <person name="Buzovetsky O."/>
            <person name="Xiong Y."/>
            <person name="Monies D."/>
            <person name="Altassan N."/>
            <person name="Shaheen R."/>
            <person name="Al-Hazzaa S.A."/>
            <person name="Alkuraya F.S."/>
        </authorList>
    </citation>
    <scope>INVOLVEMENT IN RP75</scope>
    <scope>VARIANT RP75 TRP-276</scope>
</reference>
<reference key="9">
    <citation type="journal article" date="2016" name="Invest. Ophthalmol. Vis. Sci.">
        <title>Mutations in AGBL5, Encoding alpha-Tubulin Deglutamylase, Are Associated With Autosomal Recessive Retinitis Pigmentosa.</title>
        <authorList>
            <person name="Astuti G.D."/>
            <person name="Arno G."/>
            <person name="Hull S."/>
            <person name="Pierrache L."/>
            <person name="Venselaar H."/>
            <person name="Carss K."/>
            <person name="Raymond F.L."/>
            <person name="Collin R.W."/>
            <person name="Faradz S.M."/>
            <person name="van den Born L.I."/>
            <person name="Webster A.R."/>
            <person name="Cremers F.P."/>
        </authorList>
    </citation>
    <scope>VARIANTS RP75 ARG-108; GLY-251 AND 592-TRP--VAL-886 DEL</scope>
</reference>
<reference key="10">
    <citation type="journal article" date="2016" name="Physiol. Genomics">
        <title>Establishing the involvement of the novel gene AGBL5 in retinitis pigmentosa by whole genome sequencing.</title>
        <authorList>
            <person name="Branham K."/>
            <person name="Matsui H."/>
            <person name="Biswas P."/>
            <person name="Guru A.A."/>
            <person name="Hicks M."/>
            <person name="Suk J.J."/>
            <person name="Li H."/>
            <person name="Jakubosky D."/>
            <person name="Long T."/>
            <person name="Telenti A."/>
            <person name="Nariai N."/>
            <person name="Heckenlively J.R."/>
            <person name="Frazer K.A."/>
            <person name="Sieving P.A."/>
            <person name="Ayyagari R."/>
        </authorList>
    </citation>
    <scope>VARIANTS RP75 CYS-281 AND 487-ARG--VAL-886 DEL</scope>
</reference>
<protein>
    <recommendedName>
        <fullName evidence="2">Cytosolic carboxypeptidase-like protein 5</fullName>
        <ecNumber evidence="2">3.4.17.-</ecNumber>
        <ecNumber evidence="2">3.4.17.24</ecNumber>
    </recommendedName>
    <alternativeName>
        <fullName>ATP/GTP-binding protein-like 5</fullName>
    </alternativeName>
    <alternativeName>
        <fullName evidence="12">Protein deglutamylase CCP5</fullName>
    </alternativeName>
</protein>
<dbReference type="EC" id="3.4.17.-" evidence="2"/>
<dbReference type="EC" id="3.4.17.24" evidence="2"/>
<dbReference type="EMBL" id="AL833844">
    <property type="protein sequence ID" value="CAD38704.1"/>
    <property type="molecule type" value="mRNA"/>
</dbReference>
<dbReference type="EMBL" id="AK302091">
    <property type="protein sequence ID" value="BAH13623.1"/>
    <property type="molecule type" value="mRNA"/>
</dbReference>
<dbReference type="EMBL" id="AC013403">
    <property type="protein sequence ID" value="AAX93164.1"/>
    <property type="status" value="ALT_SEQ"/>
    <property type="molecule type" value="Genomic_DNA"/>
</dbReference>
<dbReference type="EMBL" id="AC013472">
    <property type="protein sequence ID" value="AAY14655.1"/>
    <property type="status" value="ALT_SEQ"/>
    <property type="molecule type" value="Genomic_DNA"/>
</dbReference>
<dbReference type="EMBL" id="CH471053">
    <property type="protein sequence ID" value="EAX00649.1"/>
    <property type="molecule type" value="Genomic_DNA"/>
</dbReference>
<dbReference type="EMBL" id="CH471053">
    <property type="protein sequence ID" value="EAX00651.1"/>
    <property type="molecule type" value="Genomic_DNA"/>
</dbReference>
<dbReference type="EMBL" id="CH471053">
    <property type="protein sequence ID" value="EAX00652.1"/>
    <property type="molecule type" value="Genomic_DNA"/>
</dbReference>
<dbReference type="EMBL" id="CH471053">
    <property type="protein sequence ID" value="EAX00653.1"/>
    <property type="molecule type" value="Genomic_DNA"/>
</dbReference>
<dbReference type="EMBL" id="BC007415">
    <property type="protein sequence ID" value="AAH07415.2"/>
    <property type="molecule type" value="mRNA"/>
</dbReference>
<dbReference type="EMBL" id="BC018584">
    <property type="status" value="NOT_ANNOTATED_CDS"/>
    <property type="molecule type" value="mRNA"/>
</dbReference>
<dbReference type="EMBL" id="BC131498">
    <property type="protein sequence ID" value="AAI31499.1"/>
    <property type="molecule type" value="mRNA"/>
</dbReference>
<dbReference type="EMBL" id="AK023398">
    <property type="protein sequence ID" value="BAB14560.1"/>
    <property type="molecule type" value="mRNA"/>
</dbReference>
<dbReference type="EMBL" id="AK025492">
    <property type="protein sequence ID" value="BAB15151.1"/>
    <property type="status" value="ALT_INIT"/>
    <property type="molecule type" value="mRNA"/>
</dbReference>
<dbReference type="CCDS" id="CCDS1732.3">
    <molecule id="Q8NDL9-1"/>
</dbReference>
<dbReference type="CCDS" id="CCDS42665.1">
    <molecule id="Q8NDL9-3"/>
</dbReference>
<dbReference type="RefSeq" id="NP_001030584.1">
    <molecule id="Q8NDL9-3"/>
    <property type="nucleotide sequence ID" value="NM_001035507.3"/>
</dbReference>
<dbReference type="RefSeq" id="NP_068603.4">
    <molecule id="Q8NDL9-1"/>
    <property type="nucleotide sequence ID" value="NM_021831.5"/>
</dbReference>
<dbReference type="RefSeq" id="XP_011531313.1">
    <molecule id="Q8NDL9-1"/>
    <property type="nucleotide sequence ID" value="XM_011533011.4"/>
</dbReference>
<dbReference type="RefSeq" id="XP_011531314.1">
    <molecule id="Q8NDL9-1"/>
    <property type="nucleotide sequence ID" value="XM_011533012.3"/>
</dbReference>
<dbReference type="RefSeq" id="XP_011531315.1">
    <molecule id="Q8NDL9-1"/>
    <property type="nucleotide sequence ID" value="XM_011533013.3"/>
</dbReference>
<dbReference type="RefSeq" id="XP_047301330.1">
    <molecule id="Q8NDL9-2"/>
    <property type="nucleotide sequence ID" value="XM_047445374.1"/>
</dbReference>
<dbReference type="RefSeq" id="XP_047301332.1">
    <molecule id="Q8NDL9-3"/>
    <property type="nucleotide sequence ID" value="XM_047445376.1"/>
</dbReference>
<dbReference type="RefSeq" id="XP_047301333.1">
    <molecule id="Q8NDL9-3"/>
    <property type="nucleotide sequence ID" value="XM_047445377.1"/>
</dbReference>
<dbReference type="RefSeq" id="XP_054199250.1">
    <molecule id="Q8NDL9-1"/>
    <property type="nucleotide sequence ID" value="XM_054343275.1"/>
</dbReference>
<dbReference type="RefSeq" id="XP_054199251.1">
    <molecule id="Q8NDL9-1"/>
    <property type="nucleotide sequence ID" value="XM_054343276.1"/>
</dbReference>
<dbReference type="RefSeq" id="XP_054199252.1">
    <molecule id="Q8NDL9-1"/>
    <property type="nucleotide sequence ID" value="XM_054343277.1"/>
</dbReference>
<dbReference type="RefSeq" id="XP_054199253.1">
    <molecule id="Q8NDL9-2"/>
    <property type="nucleotide sequence ID" value="XM_054343278.1"/>
</dbReference>
<dbReference type="RefSeq" id="XP_054199256.1">
    <molecule id="Q8NDL9-3"/>
    <property type="nucleotide sequence ID" value="XM_054343281.1"/>
</dbReference>
<dbReference type="RefSeq" id="XP_054199257.1">
    <molecule id="Q8NDL9-3"/>
    <property type="nucleotide sequence ID" value="XM_054343282.1"/>
</dbReference>
<dbReference type="PDB" id="8V3M">
    <property type="method" value="X-ray"/>
    <property type="resolution" value="1.80 A"/>
    <property type="chains" value="A=2-338, A=425-605"/>
</dbReference>
<dbReference type="PDB" id="8V3N">
    <property type="method" value="X-ray"/>
    <property type="resolution" value="2.30 A"/>
    <property type="chains" value="A=2-338, A=425-605"/>
</dbReference>
<dbReference type="PDB" id="8V3O">
    <property type="method" value="X-ray"/>
    <property type="resolution" value="2.30 A"/>
    <property type="chains" value="A=2-338, A=425-605"/>
</dbReference>
<dbReference type="PDB" id="8V3P">
    <property type="method" value="X-ray"/>
    <property type="resolution" value="2.36 A"/>
    <property type="chains" value="A=2-338, A=425-605"/>
</dbReference>
<dbReference type="PDB" id="8V3Q">
    <property type="method" value="EM"/>
    <property type="resolution" value="3.10 A"/>
    <property type="chains" value="A=2-605"/>
</dbReference>
<dbReference type="PDB" id="8V3R">
    <property type="method" value="EM"/>
    <property type="resolution" value="3.40 A"/>
    <property type="chains" value="A=2-605"/>
</dbReference>
<dbReference type="PDB" id="8V3S">
    <property type="method" value="EM"/>
    <property type="resolution" value="3.60 A"/>
    <property type="chains" value="A=2-605"/>
</dbReference>
<dbReference type="PDB" id="8V4K">
    <property type="method" value="EM"/>
    <property type="resolution" value="3.10 A"/>
    <property type="chains" value="E=2-605"/>
</dbReference>
<dbReference type="PDB" id="8V4L">
    <property type="method" value="EM"/>
    <property type="resolution" value="2.90 A"/>
    <property type="chains" value="E=2-605"/>
</dbReference>
<dbReference type="PDB" id="8V4M">
    <property type="method" value="EM"/>
    <property type="resolution" value="3.00 A"/>
    <property type="chains" value="E=2-605"/>
</dbReference>
<dbReference type="PDBsum" id="8V3M"/>
<dbReference type="PDBsum" id="8V3N"/>
<dbReference type="PDBsum" id="8V3O"/>
<dbReference type="PDBsum" id="8V3P"/>
<dbReference type="PDBsum" id="8V3Q"/>
<dbReference type="PDBsum" id="8V3R"/>
<dbReference type="PDBsum" id="8V3S"/>
<dbReference type="PDBsum" id="8V4K"/>
<dbReference type="PDBsum" id="8V4L"/>
<dbReference type="PDBsum" id="8V4M"/>
<dbReference type="EMDB" id="EMD-42950"/>
<dbReference type="EMDB" id="EMD-42951"/>
<dbReference type="EMDB" id="EMD-42952"/>
<dbReference type="EMDB" id="EMD-42971"/>
<dbReference type="EMDB" id="EMD-42972"/>
<dbReference type="EMDB" id="EMD-42973"/>
<dbReference type="SMR" id="Q8NDL9"/>
<dbReference type="BioGRID" id="121935">
    <property type="interactions" value="26"/>
</dbReference>
<dbReference type="FunCoup" id="Q8NDL9">
    <property type="interactions" value="1442"/>
</dbReference>
<dbReference type="IntAct" id="Q8NDL9">
    <property type="interactions" value="19"/>
</dbReference>
<dbReference type="MINT" id="Q8NDL9"/>
<dbReference type="STRING" id="9606.ENSP00000353249"/>
<dbReference type="MEROPS" id="M14.025"/>
<dbReference type="GlyGen" id="Q8NDL9">
    <property type="glycosylation" value="3 sites, 1 O-linked glycan (1 site)"/>
</dbReference>
<dbReference type="iPTMnet" id="Q8NDL9"/>
<dbReference type="PhosphoSitePlus" id="Q8NDL9"/>
<dbReference type="BioMuta" id="AGBL5"/>
<dbReference type="DMDM" id="74715354"/>
<dbReference type="MassIVE" id="Q8NDL9"/>
<dbReference type="PaxDb" id="9606-ENSP00000353249"/>
<dbReference type="PeptideAtlas" id="Q8NDL9"/>
<dbReference type="ProteomicsDB" id="73036">
    <molecule id="Q8NDL9-1"/>
</dbReference>
<dbReference type="ProteomicsDB" id="73037">
    <molecule id="Q8NDL9-2"/>
</dbReference>
<dbReference type="ProteomicsDB" id="73038">
    <molecule id="Q8NDL9-3"/>
</dbReference>
<dbReference type="Antibodypedia" id="28106">
    <property type="antibodies" value="154 antibodies from 24 providers"/>
</dbReference>
<dbReference type="DNASU" id="60509"/>
<dbReference type="Ensembl" id="ENST00000323064.12">
    <molecule id="Q8NDL9-3"/>
    <property type="protein sequence ID" value="ENSP00000323681.8"/>
    <property type="gene ID" value="ENSG00000084693.16"/>
</dbReference>
<dbReference type="Ensembl" id="ENST00000360131.5">
    <molecule id="Q8NDL9-1"/>
    <property type="protein sequence ID" value="ENSP00000353249.4"/>
    <property type="gene ID" value="ENSG00000084693.16"/>
</dbReference>
<dbReference type="Ensembl" id="ENST00000487078.5">
    <molecule id="Q8NDL9-2"/>
    <property type="protein sequence ID" value="ENSP00000433830.1"/>
    <property type="gene ID" value="ENSG00000084693.16"/>
</dbReference>
<dbReference type="GeneID" id="60509"/>
<dbReference type="KEGG" id="hsa:60509"/>
<dbReference type="MANE-Select" id="ENST00000360131.5">
    <property type="protein sequence ID" value="ENSP00000353249.4"/>
    <property type="RefSeq nucleotide sequence ID" value="NM_021831.6"/>
    <property type="RefSeq protein sequence ID" value="NP_068603.4"/>
</dbReference>
<dbReference type="UCSC" id="uc002rid.4">
    <molecule id="Q8NDL9-1"/>
    <property type="organism name" value="human"/>
</dbReference>
<dbReference type="AGR" id="HGNC:26147"/>
<dbReference type="CTD" id="60509"/>
<dbReference type="DisGeNET" id="60509"/>
<dbReference type="GeneCards" id="AGBL5"/>
<dbReference type="HGNC" id="HGNC:26147">
    <property type="gene designation" value="AGBL5"/>
</dbReference>
<dbReference type="HPA" id="ENSG00000084693">
    <property type="expression patterns" value="Group enriched (parathyroid gland, testis)"/>
</dbReference>
<dbReference type="MalaCards" id="AGBL5"/>
<dbReference type="MIM" id="615900">
    <property type="type" value="gene"/>
</dbReference>
<dbReference type="MIM" id="617023">
    <property type="type" value="phenotype"/>
</dbReference>
<dbReference type="neXtProt" id="NX_Q8NDL9"/>
<dbReference type="OpenTargets" id="ENSG00000084693"/>
<dbReference type="Orphanet" id="791">
    <property type="disease" value="Retinitis pigmentosa"/>
</dbReference>
<dbReference type="PharmGKB" id="PA162375816"/>
<dbReference type="VEuPathDB" id="HostDB:ENSG00000084693"/>
<dbReference type="eggNOG" id="KOG3641">
    <property type="taxonomic scope" value="Eukaryota"/>
</dbReference>
<dbReference type="GeneTree" id="ENSGT00940000158032"/>
<dbReference type="HOGENOM" id="CLU_007523_3_2_1"/>
<dbReference type="InParanoid" id="Q8NDL9"/>
<dbReference type="OMA" id="LMHGCID"/>
<dbReference type="OrthoDB" id="10253041at2759"/>
<dbReference type="PAN-GO" id="Q8NDL9">
    <property type="GO annotations" value="0 GO annotations based on evolutionary models"/>
</dbReference>
<dbReference type="PhylomeDB" id="Q8NDL9"/>
<dbReference type="TreeFam" id="TF324301"/>
<dbReference type="BRENDA" id="3.4.17.24">
    <property type="organism ID" value="2681"/>
</dbReference>
<dbReference type="PathwayCommons" id="Q8NDL9"/>
<dbReference type="Reactome" id="R-HSA-8955332">
    <property type="pathway name" value="Carboxyterminal post-translational modifications of tubulin"/>
</dbReference>
<dbReference type="SignaLink" id="Q8NDL9"/>
<dbReference type="BioGRID-ORCS" id="60509">
    <property type="hits" value="21 hits in 1161 CRISPR screens"/>
</dbReference>
<dbReference type="ChiTaRS" id="AGBL5">
    <property type="organism name" value="human"/>
</dbReference>
<dbReference type="GenomeRNAi" id="60509"/>
<dbReference type="Pharos" id="Q8NDL9">
    <property type="development level" value="Tbio"/>
</dbReference>
<dbReference type="PRO" id="PR:Q8NDL9"/>
<dbReference type="Proteomes" id="UP000005640">
    <property type="component" value="Chromosome 2"/>
</dbReference>
<dbReference type="RNAct" id="Q8NDL9">
    <property type="molecule type" value="protein"/>
</dbReference>
<dbReference type="Bgee" id="ENSG00000084693">
    <property type="expression patterns" value="Expressed in left testis and 176 other cell types or tissues"/>
</dbReference>
<dbReference type="ExpressionAtlas" id="Q8NDL9">
    <property type="expression patterns" value="baseline and differential"/>
</dbReference>
<dbReference type="GO" id="GO:0005737">
    <property type="term" value="C:cytoplasm"/>
    <property type="evidence" value="ECO:0000314"/>
    <property type="project" value="LIFEdb"/>
</dbReference>
<dbReference type="GO" id="GO:0005829">
    <property type="term" value="C:cytosol"/>
    <property type="evidence" value="ECO:0000250"/>
    <property type="project" value="UniProtKB"/>
</dbReference>
<dbReference type="GO" id="GO:0015630">
    <property type="term" value="C:microtubule cytoskeleton"/>
    <property type="evidence" value="ECO:0000318"/>
    <property type="project" value="GO_Central"/>
</dbReference>
<dbReference type="GO" id="GO:0030496">
    <property type="term" value="C:midbody"/>
    <property type="evidence" value="ECO:0000314"/>
    <property type="project" value="UniProtKB"/>
</dbReference>
<dbReference type="GO" id="GO:0072686">
    <property type="term" value="C:mitotic spindle"/>
    <property type="evidence" value="ECO:0000314"/>
    <property type="project" value="UniProtKB"/>
</dbReference>
<dbReference type="GO" id="GO:0005634">
    <property type="term" value="C:nucleus"/>
    <property type="evidence" value="ECO:0000314"/>
    <property type="project" value="UniProtKB"/>
</dbReference>
<dbReference type="GO" id="GO:0004181">
    <property type="term" value="F:metallocarboxypeptidase activity"/>
    <property type="evidence" value="ECO:0000250"/>
    <property type="project" value="UniProtKB"/>
</dbReference>
<dbReference type="GO" id="GO:0015631">
    <property type="term" value="F:tubulin binding"/>
    <property type="evidence" value="ECO:0000250"/>
    <property type="project" value="UniProtKB"/>
</dbReference>
<dbReference type="GO" id="GO:0008270">
    <property type="term" value="F:zinc ion binding"/>
    <property type="evidence" value="ECO:0007669"/>
    <property type="project" value="InterPro"/>
</dbReference>
<dbReference type="GO" id="GO:0035609">
    <property type="term" value="P:C-terminal protein deglutamylation"/>
    <property type="evidence" value="ECO:0000250"/>
    <property type="project" value="UniProtKB"/>
</dbReference>
<dbReference type="GO" id="GO:0051607">
    <property type="term" value="P:defense response to virus"/>
    <property type="evidence" value="ECO:0000250"/>
    <property type="project" value="UniProtKB"/>
</dbReference>
<dbReference type="GO" id="GO:0035611">
    <property type="term" value="P:protein branching point deglutamylation"/>
    <property type="evidence" value="ECO:0000250"/>
    <property type="project" value="UniProtKB"/>
</dbReference>
<dbReference type="GO" id="GO:0035608">
    <property type="term" value="P:protein deglutamylation"/>
    <property type="evidence" value="ECO:0000250"/>
    <property type="project" value="UniProtKB"/>
</dbReference>
<dbReference type="GO" id="GO:0035610">
    <property type="term" value="P:protein side chain deglutamylation"/>
    <property type="evidence" value="ECO:0000250"/>
    <property type="project" value="UniProtKB"/>
</dbReference>
<dbReference type="GO" id="GO:0006508">
    <property type="term" value="P:proteolysis"/>
    <property type="evidence" value="ECO:0007669"/>
    <property type="project" value="UniProtKB-KW"/>
</dbReference>
<dbReference type="CDD" id="cd06236">
    <property type="entry name" value="M14_AGBL5_like"/>
    <property type="match status" value="1"/>
</dbReference>
<dbReference type="FunFam" id="3.40.630.10:FF:000055">
    <property type="entry name" value="Cytosolic carboxypeptidase-like protein 5 isoform X1"/>
    <property type="match status" value="1"/>
</dbReference>
<dbReference type="FunFam" id="3.40.630.10:FF:000049">
    <property type="entry name" value="cytosolic carboxypeptidase-like protein 5 isoform X1"/>
    <property type="match status" value="1"/>
</dbReference>
<dbReference type="FunFam" id="2.60.40.3120:FF:000002">
    <property type="entry name" value="cytosolic carboxypeptidase-like protein 5 isoform X2"/>
    <property type="match status" value="1"/>
</dbReference>
<dbReference type="Gene3D" id="2.60.40.3120">
    <property type="match status" value="1"/>
</dbReference>
<dbReference type="Gene3D" id="3.40.630.10">
    <property type="entry name" value="Zn peptidases"/>
    <property type="match status" value="2"/>
</dbReference>
<dbReference type="InterPro" id="IPR050821">
    <property type="entry name" value="Cytosolic_carboxypeptidase"/>
</dbReference>
<dbReference type="InterPro" id="IPR034286">
    <property type="entry name" value="M14_AGBL5-like"/>
</dbReference>
<dbReference type="InterPro" id="IPR040626">
    <property type="entry name" value="Pepdidase_M14_N"/>
</dbReference>
<dbReference type="InterPro" id="IPR000834">
    <property type="entry name" value="Peptidase_M14"/>
</dbReference>
<dbReference type="PANTHER" id="PTHR12756">
    <property type="entry name" value="CYTOSOLIC CARBOXYPEPTIDASE"/>
    <property type="match status" value="1"/>
</dbReference>
<dbReference type="PANTHER" id="PTHR12756:SF12">
    <property type="entry name" value="CYTOSOLIC CARBOXYPEPTIDASE-LIKE PROTEIN 5"/>
    <property type="match status" value="1"/>
</dbReference>
<dbReference type="Pfam" id="PF18027">
    <property type="entry name" value="Pepdidase_M14_N"/>
    <property type="match status" value="1"/>
</dbReference>
<dbReference type="Pfam" id="PF00246">
    <property type="entry name" value="Peptidase_M14"/>
    <property type="match status" value="1"/>
</dbReference>
<dbReference type="SUPFAM" id="SSF53187">
    <property type="entry name" value="Zn-dependent exopeptidases"/>
    <property type="match status" value="1"/>
</dbReference>
<dbReference type="PROSITE" id="PS52035">
    <property type="entry name" value="PEPTIDASE_M14"/>
    <property type="match status" value="1"/>
</dbReference>
<comment type="function">
    <text evidence="2">Metallocarboxypeptidase that mediates deglutamylation of tubulin and non-tubulin target proteins. Catalyzes the removal of polyglutamate side chains present on the gamma-carboxyl group of glutamate residues within the C-terminal tail of alpha- and beta-tubulin. Cleaves alpha- and gamma-linked polyglutamate tubulin side-chain, as well as the branching point glutamate. Also catalyzes the removal of alpha-linked glutamate residues from the carboxy-terminus of alpha-tubulin. Mediates deglutamylation of nucleotidyltransferase CGAS, leading to CGAS antiviral defense response activation.</text>
</comment>
<comment type="catalytic activity">
    <reaction evidence="2">
        <text>gamma-L-glutamyl-L-glutamyl-[protein] + H2O = L-glutamyl-[protein] + L-glutamate</text>
        <dbReference type="Rhea" id="RHEA:60152"/>
        <dbReference type="Rhea" id="RHEA-COMP:10208"/>
        <dbReference type="Rhea" id="RHEA-COMP:15517"/>
        <dbReference type="ChEBI" id="CHEBI:15377"/>
        <dbReference type="ChEBI" id="CHEBI:29973"/>
        <dbReference type="ChEBI" id="CHEBI:29985"/>
        <dbReference type="ChEBI" id="CHEBI:143622"/>
    </reaction>
    <physiologicalReaction direction="left-to-right" evidence="2">
        <dbReference type="Rhea" id="RHEA:60153"/>
    </physiologicalReaction>
</comment>
<comment type="catalytic activity">
    <reaction evidence="2">
        <text>(L-glutamyl)(n+1)-gamma-L-glutamyl-L-glutamyl-[protein] + H2O = (L-glutamyl)(n)-gamma-L-glutamyl-L-glutamyl-[protein] + L-glutamate</text>
        <dbReference type="Rhea" id="RHEA:60004"/>
        <dbReference type="Rhea" id="RHEA-COMP:15519"/>
        <dbReference type="Rhea" id="RHEA-COMP:15675"/>
        <dbReference type="ChEBI" id="CHEBI:15377"/>
        <dbReference type="ChEBI" id="CHEBI:29985"/>
        <dbReference type="ChEBI" id="CHEBI:143623"/>
    </reaction>
    <physiologicalReaction direction="left-to-right" evidence="2">
        <dbReference type="Rhea" id="RHEA:60005"/>
    </physiologicalReaction>
</comment>
<comment type="catalytic activity">
    <reaction evidence="2">
        <text>C-terminal L-alpha-aminoacyl-L-glutamyl-[tubulin] + H2O = C-terminal L-alpha-aminoacyl-[tubulin] + L-glutamate</text>
        <dbReference type="Rhea" id="RHEA:63796"/>
        <dbReference type="Rhea" id="RHEA-COMP:16436"/>
        <dbReference type="Rhea" id="RHEA-COMP:16437"/>
        <dbReference type="ChEBI" id="CHEBI:15377"/>
        <dbReference type="ChEBI" id="CHEBI:29985"/>
        <dbReference type="ChEBI" id="CHEBI:90782"/>
        <dbReference type="ChEBI" id="CHEBI:149556"/>
        <dbReference type="EC" id="3.4.17.24"/>
    </reaction>
    <physiologicalReaction direction="left-to-right" evidence="2">
        <dbReference type="Rhea" id="RHEA:63797"/>
    </physiologicalReaction>
</comment>
<comment type="catalytic activity">
    <reaction evidence="2">
        <text>C-terminal L-alpha-aminoacyl-L-glutamyl-L-glutamyl-[tubulin] + H2O = C-terminal L-alpha-aminoacyl-L-glutamyl-[tubulin] + L-glutamate</text>
        <dbReference type="Rhea" id="RHEA:63792"/>
        <dbReference type="Rhea" id="RHEA-COMP:16435"/>
        <dbReference type="Rhea" id="RHEA-COMP:16436"/>
        <dbReference type="ChEBI" id="CHEBI:15377"/>
        <dbReference type="ChEBI" id="CHEBI:29985"/>
        <dbReference type="ChEBI" id="CHEBI:149555"/>
        <dbReference type="ChEBI" id="CHEBI:149556"/>
        <dbReference type="EC" id="3.4.17.24"/>
    </reaction>
    <physiologicalReaction direction="left-to-right" evidence="2">
        <dbReference type="Rhea" id="RHEA:63793"/>
    </physiologicalReaction>
</comment>
<comment type="cofactor">
    <cofactor evidence="1">
        <name>Zn(2+)</name>
        <dbReference type="ChEBI" id="CHEBI:29105"/>
    </cofactor>
    <text evidence="1">Binds 1 zinc ion per subunit.</text>
</comment>
<comment type="subcellular location">
    <subcellularLocation>
        <location evidence="2">Cytoplasm</location>
        <location evidence="2">Cytosol</location>
    </subcellularLocation>
    <subcellularLocation>
        <location evidence="5">Nucleus</location>
    </subcellularLocation>
    <subcellularLocation>
        <location evidence="5">Cytoplasm</location>
        <location evidence="5">Cytoskeleton</location>
        <location evidence="5">Spindle</location>
    </subcellularLocation>
    <subcellularLocation>
        <location evidence="5">Midbody</location>
    </subcellularLocation>
    <text evidence="2 5">Mainly cytoplasmic. Slight accumulation in the nucleus is observed (By similarity). Colocalizes with alpha-tubulin in the mitotic spindle and with midbody microtubules in the intercellular bridges formed during cytokinesis.</text>
</comment>
<comment type="alternative products">
    <event type="alternative splicing"/>
    <isoform>
        <id>Q8NDL9-1</id>
        <name>1</name>
        <sequence type="displayed"/>
    </isoform>
    <isoform>
        <id>Q8NDL9-2</id>
        <name>2</name>
        <sequence type="described" ref="VSP_028361 VSP_028362"/>
    </isoform>
    <isoform>
        <id>Q8NDL9-3</id>
        <name>3</name>
        <sequence type="described" ref="VSP_028359 VSP_028360"/>
    </isoform>
</comment>
<comment type="tissue specificity">
    <text>Expressed in brain.</text>
</comment>
<comment type="disease" evidence="6 7 8 9">
    <disease id="DI-04756">
        <name>Retinitis pigmentosa 75</name>
        <acronym>RP75</acronym>
        <description>A form of retinitis pigmentosa, a retinal dystrophy belonging to the group of pigmentary retinopathies. Retinitis pigmentosa is characterized by retinal pigment deposits visible on fundus examination and primary loss of rod photoreceptor cells followed by secondary loss of cone photoreceptors. Patients typically have night vision blindness and loss of midperipheral visual field. As their condition progresses, they lose their far peripheral visual field and eventually central vision as well. RP75 inheritance is autosomal recessive.</description>
        <dbReference type="MIM" id="617023"/>
    </disease>
    <text>The disease is caused by variants affecting the gene represented in this entry.</text>
</comment>
<comment type="similarity">
    <text evidence="12">Belongs to the peptidase M14 family.</text>
</comment>
<comment type="sequence caution" evidence="12">
    <conflict type="erroneous gene model prediction">
        <sequence resource="EMBL-CDS" id="AAX93164"/>
    </conflict>
</comment>
<comment type="sequence caution" evidence="12">
    <conflict type="erroneous gene model prediction">
        <sequence resource="EMBL-CDS" id="AAY14655"/>
    </conflict>
</comment>
<comment type="sequence caution" evidence="12">
    <conflict type="erroneous initiation">
        <sequence resource="EMBL-CDS" id="BAB15151"/>
    </conflict>
    <text>Truncated N-terminus.</text>
</comment>
<name>CBPC5_HUMAN</name>
<organism>
    <name type="scientific">Homo sapiens</name>
    <name type="common">Human</name>
    <dbReference type="NCBI Taxonomy" id="9606"/>
    <lineage>
        <taxon>Eukaryota</taxon>
        <taxon>Metazoa</taxon>
        <taxon>Chordata</taxon>
        <taxon>Craniata</taxon>
        <taxon>Vertebrata</taxon>
        <taxon>Euteleostomi</taxon>
        <taxon>Mammalia</taxon>
        <taxon>Eutheria</taxon>
        <taxon>Euarchontoglires</taxon>
        <taxon>Primates</taxon>
        <taxon>Haplorrhini</taxon>
        <taxon>Catarrhini</taxon>
        <taxon>Hominidae</taxon>
        <taxon>Homo</taxon>
    </lineage>
</organism>
<proteinExistence type="evidence at protein level"/>
<sequence length="886" mass="97534">MELRCGGLLFSSRFDSGNLAHVEKVESLSSDGEGVGGGASALTSGIASSPDYEFNVWTRPDCAETEFENGNRSWFYFSVRGGMPGKLIKINIMNMNKQSKLYSQGMAPFVRTLPTRPRWERIRDRPTFEMTETQFVLSFVHRFVEGRGATTFFAFCYPFSYSDCQELLNQLDQRFPENHPTHSSPLDTIYYHRELLCYSLDGLRVDLLTITSCHGLREDREPRLEQLFPDTSTPRPFRFAGKRIFFLSSRVHPGETPSSFVFNGFLDFILRPDDPRAQTLRRLFVFKLIPMLNPDGVVRGHYRTDSRGVNLNRQYLKPDAVLHPAIYGAKAVLLYHHVHSRLNSQSSSEHQPSSCLPPDAPVSDLEKANNLQNEAQCGHSADRHNAEAWKQTEPAEQKLNSVWIMPQQSAGLEESAPDTIPPKESGVAYYVDLHGHASKRGCFMYGNSFSDESTQVENMLYPKLISLNSAHFDFQGCNFSEKNMYARDRRDGQSKEGSGRVAIYKASGIIHSYTLECNYNTGRSVNSIPAACHDNGRASPPPPPAFPSRYTVELFEQVGRAMAIAALDMAECNPWPRIVLSEHSSLTNLRAWMLKHVRNSRGLSSTLNVGVNKKRGLRTPPKSHNGLPVSCSENTLSRARSFSTGTSAGGSSSSQQNSPQMKNSPSFPFHGSRPAGLPGLGSSTQKVTHRVLGPVREPRSQDRRRQQQPLNHRPAGSLAPSPAPTSSGPASSHKLGSCLLPDSFNIPGSSCSLLSSGDKPEAVMVIGKGLLGTGARMPCIKTRLQARPRLGRGSPPTRRGMKGSSGPTSPTPRTRESSELELGSCSATPGLPQARPPRPRSAPAFSPISCSLSDSPSWNCYSRGPLGQPEVCFVPKSPPLTVSPRV</sequence>